<gene>
    <name evidence="1" type="primary">kup</name>
    <name type="ordered locus">Bcep18194_A5100</name>
</gene>
<keyword id="KW-0997">Cell inner membrane</keyword>
<keyword id="KW-1003">Cell membrane</keyword>
<keyword id="KW-0406">Ion transport</keyword>
<keyword id="KW-0472">Membrane</keyword>
<keyword id="KW-0630">Potassium</keyword>
<keyword id="KW-0633">Potassium transport</keyword>
<keyword id="KW-0769">Symport</keyword>
<keyword id="KW-0812">Transmembrane</keyword>
<keyword id="KW-1133">Transmembrane helix</keyword>
<keyword id="KW-0813">Transport</keyword>
<name>KUP_BURL3</name>
<accession>Q39FS2</accession>
<sequence>MNDTIHATDAAHAPHSTQQHSMRALAIAAIGVVFGDIGTSPLYSLKEAFSPAHGIPLTEGSILGVISLLFWAIILVVGIKYLLFVMRADNNGEGGVLALMALSLRPLDSKTRVAGALMALGIFGACMFYGDAVITPAISVMSAVEGLEIATPHLSHLVLPITIVILIALFWIQRHGTALVGKLFGPIMVLWFVAIAALGVYHIVRVPGIMAAINPYYAASFMADHLLQAYVVLGSVVLVLTGAEALYADMGHFGAKPIRIAAYGLVMPSLVLNYFGQGALLIQNPKAIENPFFLLAPEWGLLPLVILSTVATVIASQAVISGAYSLTSQAIQLGYVPRMKVLHTSELAIGQIYVPVVNWLLLFVILCIVIGFKSSDNLAAAYGIAVTATMVITTVLAAVVMVKVWNWNRLLVGAIIAVFLAVDLGFFGANLLKVAQGGWLPLGIGALLFFLLMTWYKGRHIVKERTAADGIPLEPFLQGLLAHPPHRVSGTAIYLTGNDKLVPVSLLHNLKHNKVLHERTIFLTFVTRDIPYVRDDKRQTSRDAGGGLYIVRAEYGFNETPDVKAVLEEFGRTHDMTFELMDTSFFLARETVVPTHLPGMSIWRERVFAWMHQNAAKPTDFFSIPANRVVELGTKIEI</sequence>
<evidence type="ECO:0000255" key="1">
    <source>
        <dbReference type="HAMAP-Rule" id="MF_01522"/>
    </source>
</evidence>
<reference key="1">
    <citation type="submission" date="2005-10" db="EMBL/GenBank/DDBJ databases">
        <title>Complete sequence of chromosome 1 of Burkholderia sp. 383.</title>
        <authorList>
            <consortium name="US DOE Joint Genome Institute"/>
            <person name="Copeland A."/>
            <person name="Lucas S."/>
            <person name="Lapidus A."/>
            <person name="Barry K."/>
            <person name="Detter J.C."/>
            <person name="Glavina T."/>
            <person name="Hammon N."/>
            <person name="Israni S."/>
            <person name="Pitluck S."/>
            <person name="Chain P."/>
            <person name="Malfatti S."/>
            <person name="Shin M."/>
            <person name="Vergez L."/>
            <person name="Schmutz J."/>
            <person name="Larimer F."/>
            <person name="Land M."/>
            <person name="Kyrpides N."/>
            <person name="Lykidis A."/>
            <person name="Richardson P."/>
        </authorList>
    </citation>
    <scope>NUCLEOTIDE SEQUENCE [LARGE SCALE GENOMIC DNA]</scope>
    <source>
        <strain>ATCC 17760 / DSM 23089 / LMG 22485 / NCIMB 9086 / R18194 / 383</strain>
    </source>
</reference>
<organism>
    <name type="scientific">Burkholderia lata (strain ATCC 17760 / DSM 23089 / LMG 22485 / NCIMB 9086 / R18194 / 383)</name>
    <dbReference type="NCBI Taxonomy" id="482957"/>
    <lineage>
        <taxon>Bacteria</taxon>
        <taxon>Pseudomonadati</taxon>
        <taxon>Pseudomonadota</taxon>
        <taxon>Betaproteobacteria</taxon>
        <taxon>Burkholderiales</taxon>
        <taxon>Burkholderiaceae</taxon>
        <taxon>Burkholderia</taxon>
        <taxon>Burkholderia cepacia complex</taxon>
    </lineage>
</organism>
<dbReference type="EMBL" id="CP000151">
    <property type="protein sequence ID" value="ABB08694.1"/>
    <property type="molecule type" value="Genomic_DNA"/>
</dbReference>
<dbReference type="RefSeq" id="WP_011352250.1">
    <property type="nucleotide sequence ID" value="NC_007510.1"/>
</dbReference>
<dbReference type="GeneID" id="45094976"/>
<dbReference type="KEGG" id="bur:Bcep18194_A5100"/>
<dbReference type="PATRIC" id="fig|482957.22.peg.2037"/>
<dbReference type="HOGENOM" id="CLU_008142_4_2_4"/>
<dbReference type="Proteomes" id="UP000002705">
    <property type="component" value="Chromosome 1"/>
</dbReference>
<dbReference type="GO" id="GO:0005886">
    <property type="term" value="C:plasma membrane"/>
    <property type="evidence" value="ECO:0007669"/>
    <property type="project" value="UniProtKB-SubCell"/>
</dbReference>
<dbReference type="GO" id="GO:0015079">
    <property type="term" value="F:potassium ion transmembrane transporter activity"/>
    <property type="evidence" value="ECO:0007669"/>
    <property type="project" value="UniProtKB-UniRule"/>
</dbReference>
<dbReference type="GO" id="GO:0015293">
    <property type="term" value="F:symporter activity"/>
    <property type="evidence" value="ECO:0007669"/>
    <property type="project" value="UniProtKB-UniRule"/>
</dbReference>
<dbReference type="HAMAP" id="MF_01522">
    <property type="entry name" value="Kup"/>
    <property type="match status" value="1"/>
</dbReference>
<dbReference type="InterPro" id="IPR003855">
    <property type="entry name" value="K+_transporter"/>
</dbReference>
<dbReference type="InterPro" id="IPR053952">
    <property type="entry name" value="K_trans_C"/>
</dbReference>
<dbReference type="InterPro" id="IPR053951">
    <property type="entry name" value="K_trans_N"/>
</dbReference>
<dbReference type="InterPro" id="IPR023051">
    <property type="entry name" value="Kup"/>
</dbReference>
<dbReference type="PANTHER" id="PTHR30540:SF79">
    <property type="entry name" value="LOW AFFINITY POTASSIUM TRANSPORT SYSTEM PROTEIN KUP"/>
    <property type="match status" value="1"/>
</dbReference>
<dbReference type="PANTHER" id="PTHR30540">
    <property type="entry name" value="OSMOTIC STRESS POTASSIUM TRANSPORTER"/>
    <property type="match status" value="1"/>
</dbReference>
<dbReference type="Pfam" id="PF02705">
    <property type="entry name" value="K_trans"/>
    <property type="match status" value="1"/>
</dbReference>
<dbReference type="Pfam" id="PF22776">
    <property type="entry name" value="K_trans_C"/>
    <property type="match status" value="1"/>
</dbReference>
<proteinExistence type="inferred from homology"/>
<feature type="chain" id="PRO_0000279773" description="Probable potassium transport system protein Kup">
    <location>
        <begin position="1"/>
        <end position="638"/>
    </location>
</feature>
<feature type="transmembrane region" description="Helical" evidence="1">
    <location>
        <begin position="25"/>
        <end position="45"/>
    </location>
</feature>
<feature type="transmembrane region" description="Helical" evidence="1">
    <location>
        <begin position="65"/>
        <end position="85"/>
    </location>
</feature>
<feature type="transmembrane region" description="Helical" evidence="1">
    <location>
        <begin position="114"/>
        <end position="134"/>
    </location>
</feature>
<feature type="transmembrane region" description="Helical" evidence="1">
    <location>
        <begin position="152"/>
        <end position="172"/>
    </location>
</feature>
<feature type="transmembrane region" description="Helical" evidence="1">
    <location>
        <begin position="184"/>
        <end position="204"/>
    </location>
</feature>
<feature type="transmembrane region" description="Helical" evidence="1">
    <location>
        <begin position="226"/>
        <end position="246"/>
    </location>
</feature>
<feature type="transmembrane region" description="Helical" evidence="1">
    <location>
        <begin position="262"/>
        <end position="282"/>
    </location>
</feature>
<feature type="transmembrane region" description="Helical" evidence="1">
    <location>
        <begin position="291"/>
        <end position="311"/>
    </location>
</feature>
<feature type="transmembrane region" description="Helical" evidence="1">
    <location>
        <begin position="352"/>
        <end position="372"/>
    </location>
</feature>
<feature type="transmembrane region" description="Helical" evidence="1">
    <location>
        <begin position="382"/>
        <end position="402"/>
    </location>
</feature>
<feature type="transmembrane region" description="Helical" evidence="1">
    <location>
        <begin position="410"/>
        <end position="430"/>
    </location>
</feature>
<feature type="transmembrane region" description="Helical" evidence="1">
    <location>
        <begin position="434"/>
        <end position="454"/>
    </location>
</feature>
<comment type="function">
    <text evidence="1">Transport of potassium into the cell. Likely operates as a K(+):H(+) symporter.</text>
</comment>
<comment type="catalytic activity">
    <reaction evidence="1">
        <text>K(+)(in) + H(+)(in) = K(+)(out) + H(+)(out)</text>
        <dbReference type="Rhea" id="RHEA:28490"/>
        <dbReference type="ChEBI" id="CHEBI:15378"/>
        <dbReference type="ChEBI" id="CHEBI:29103"/>
    </reaction>
    <physiologicalReaction direction="right-to-left" evidence="1">
        <dbReference type="Rhea" id="RHEA:28492"/>
    </physiologicalReaction>
</comment>
<comment type="subcellular location">
    <subcellularLocation>
        <location evidence="1">Cell inner membrane</location>
        <topology evidence="1">Multi-pass membrane protein</topology>
    </subcellularLocation>
</comment>
<comment type="similarity">
    <text evidence="1">Belongs to the HAK/KUP transporter (TC 2.A.72) family.</text>
</comment>
<protein>
    <recommendedName>
        <fullName evidence="1">Probable potassium transport system protein Kup</fullName>
    </recommendedName>
</protein>